<evidence type="ECO:0000256" key="1">
    <source>
        <dbReference type="SAM" id="MobiDB-lite"/>
    </source>
</evidence>
<evidence type="ECO:0000269" key="2">
    <source>
    </source>
</evidence>
<evidence type="ECO:0000269" key="3">
    <source>
    </source>
</evidence>
<evidence type="ECO:0000269" key="4">
    <source>
    </source>
</evidence>
<evidence type="ECO:0000269" key="5">
    <source>
    </source>
</evidence>
<evidence type="ECO:0000269" key="6">
    <source>
    </source>
</evidence>
<reference key="1">
    <citation type="journal article" date="1992" name="Virology">
        <title>Nucleotide sequence and transcriptional analysis of the p80 gene of Autographa californica nuclear polyhedrosis virus: a homologue of the Orgyia pseudotsugata nuclear polyhedrosis virus capsid-associated gene.</title>
        <authorList>
            <person name="Lu A."/>
            <person name="Carstens E.B."/>
        </authorList>
    </citation>
    <scope>NUCLEOTIDE SEQUENCE [GENOMIC DNA]</scope>
    <source>
        <strain>HR3</strain>
    </source>
</reference>
<reference key="2">
    <citation type="journal article" date="1994" name="Virology">
        <title>The complete DNA sequence of Autographa californica nuclear polyhedrosis virus.</title>
        <authorList>
            <person name="Ayres M.D."/>
            <person name="Howard S.C."/>
            <person name="Kuzio J."/>
            <person name="Lopez-Ferber M."/>
            <person name="Possee R.D."/>
        </authorList>
    </citation>
    <scope>NUCLEOTIDE SEQUENCE [LARGE SCALE GENOMIC DNA]</scope>
    <source>
        <strain>C6</strain>
    </source>
</reference>
<reference key="3">
    <citation type="journal article" date="2003" name="Proc. Natl. Acad. Sci. U.S.A.">
        <title>Determination of the protein composition of the occlusion-derived virus of Autographa californica nucleopolyhedrovirus.</title>
        <authorList>
            <person name="Braunagel S.C."/>
            <person name="Russell W.K."/>
            <person name="Rosas-Acosta G."/>
            <person name="Russell D.H."/>
            <person name="Summers M.D."/>
        </authorList>
    </citation>
    <scope>SUBCELLULAR LOCATION</scope>
</reference>
<reference key="4">
    <citation type="journal article" date="2010" name="J. Virol.">
        <title>Proteomics of the Autographa californica nucleopolyhedrovirus budded virions.</title>
        <authorList>
            <person name="Wang R."/>
            <person name="Deng F."/>
            <person name="Hou D."/>
            <person name="Zhao Y."/>
            <person name="Guo L."/>
            <person name="Wang H."/>
            <person name="Hu Z."/>
        </authorList>
    </citation>
    <scope>SUBCELLULAR LOCATION</scope>
</reference>
<reference key="5">
    <citation type="journal article" date="2011" name="Biotechnol. Bioeng.">
        <title>Engineering of baculovirus vectors for the manufacture of virion-free biopharmaceuticals.</title>
        <authorList>
            <person name="Marek M."/>
            <person name="van Oers M.M."/>
            <person name="Devaraj F.F."/>
            <person name="Vlak J.M."/>
            <person name="Merten O.W."/>
        </authorList>
    </citation>
    <scope>FUNCTION</scope>
</reference>
<reference key="6">
    <citation type="journal article" date="2011" name="J. Virol.">
        <title>Baculovirus VP80 protein and the F-actin cytoskeleton interact and connect the viral replication factory with the nuclear periphery.</title>
        <authorList>
            <person name="Marek M."/>
            <person name="Merten O.W."/>
            <person name="Galibert L."/>
            <person name="Vlak J.M."/>
            <person name="van Oers M.M."/>
        </authorList>
    </citation>
    <scope>FUNCTION</scope>
    <scope>INTERACTION WITH HOST NUCLEAR F-ACTIN</scope>
    <scope>SUBCELLULAR LOCATION</scope>
</reference>
<reference key="7">
    <citation type="journal article" date="2012" name="J. Virol.">
        <title>Essential C-terminal region of the baculovirus minor capsid protein VP80 binds DNA.</title>
        <authorList>
            <person name="Marek M."/>
            <person name="Merten O.W."/>
            <person name="Francis-Devaraj F."/>
            <person name="Oers M.M."/>
        </authorList>
    </citation>
    <scope>FUNCTION</scope>
    <scope>SUBCELLULAR LOCATION</scope>
    <scope>SUBUNIT</scope>
</reference>
<feature type="chain" id="PRO_0000132935" description="Capsid-associated protein VP80">
    <location>
        <begin position="1"/>
        <end position="691"/>
    </location>
</feature>
<feature type="region of interest" description="Disordered" evidence="1">
    <location>
        <begin position="416"/>
        <end position="466"/>
    </location>
</feature>
<feature type="compositionally biased region" description="Acidic residues" evidence="1">
    <location>
        <begin position="450"/>
        <end position="464"/>
    </location>
</feature>
<organism>
    <name type="scientific">Autographa californica nuclear polyhedrosis virus</name>
    <name type="common">AcMNPV</name>
    <dbReference type="NCBI Taxonomy" id="46015"/>
    <lineage>
        <taxon>Viruses</taxon>
        <taxon>Viruses incertae sedis</taxon>
        <taxon>Naldaviricetes</taxon>
        <taxon>Lefavirales</taxon>
        <taxon>Baculoviridae</taxon>
        <taxon>Alphabaculovirus</taxon>
        <taxon>Alphabaculovirus aucalifornicae</taxon>
    </lineage>
</organism>
<name>VP80_NPVAC</name>
<protein>
    <recommendedName>
        <fullName>Capsid-associated protein VP80</fullName>
    </recommendedName>
</protein>
<keyword id="KW-0002">3D-structure</keyword>
<keyword id="KW-0167">Capsid protein</keyword>
<keyword id="KW-0238">DNA-binding</keyword>
<keyword id="KW-1048">Host nucleus</keyword>
<keyword id="KW-1185">Reference proteome</keyword>
<keyword id="KW-0946">Virion</keyword>
<gene>
    <name type="primary">VP80</name>
    <name type="ORF">ORF104</name>
</gene>
<organismHost>
    <name type="scientific">Lepidoptera</name>
    <name type="common">butterflies and moths</name>
    <dbReference type="NCBI Taxonomy" id="7088"/>
</organismHost>
<comment type="function">
    <text evidence="4 5 6">Structural protein that plays a role in the packaging of nucleocapsids and in their egress from the nucleus toward the cell periphery.</text>
</comment>
<comment type="subunit">
    <text evidence="5 6">Homodimer. Interacts with host nuclear F-actin.</text>
</comment>
<comment type="subcellular location">
    <subcellularLocation>
        <location evidence="5 6">Host nucleus</location>
    </subcellularLocation>
    <subcellularLocation>
        <location evidence="2 3">Virion</location>
    </subcellularLocation>
    <text>Capsid-associated. Present in both the budded virus (BV) and the occluded virus (OV). The occluded form allows the virus to be transmitted from insect to insect through ingestion of contaminated food while the budded form is responsible for the dissemination of infection throughout the insect host.</text>
</comment>
<dbReference type="EMBL" id="M94914">
    <property type="protein sequence ID" value="AAA46732.1"/>
    <property type="molecule type" value="Genomic_DNA"/>
</dbReference>
<dbReference type="EMBL" id="L22858">
    <property type="protein sequence ID" value="AAA66734.1"/>
    <property type="molecule type" value="Genomic_DNA"/>
</dbReference>
<dbReference type="PIR" id="A43376">
    <property type="entry name" value="VCNVH3"/>
</dbReference>
<dbReference type="PDB" id="8I8B">
    <property type="method" value="EM"/>
    <property type="resolution" value="4.31 A"/>
    <property type="chains" value="A/B/C=1-691"/>
</dbReference>
<dbReference type="PDB" id="8VWI">
    <property type="method" value="EM"/>
    <property type="resolution" value="4.71 A"/>
    <property type="chains" value="G/H/I/b/c/d=1-691"/>
</dbReference>
<dbReference type="PDB" id="8VWJ">
    <property type="method" value="EM"/>
    <property type="resolution" value="4.78 A"/>
    <property type="chains" value="G/H/I/b/c/d=1-691"/>
</dbReference>
<dbReference type="PDBsum" id="8I8B"/>
<dbReference type="PDBsum" id="8VWI"/>
<dbReference type="PDBsum" id="8VWJ"/>
<dbReference type="EMDB" id="EMD-43588"/>
<dbReference type="EMDB" id="EMD-43589"/>
<dbReference type="SMR" id="Q00733"/>
<dbReference type="KEGG" id="vg:1403937"/>
<dbReference type="OrthoDB" id="1682at10239"/>
<dbReference type="Proteomes" id="UP000008292">
    <property type="component" value="Segment"/>
</dbReference>
<dbReference type="GO" id="GO:0042025">
    <property type="term" value="C:host cell nucleus"/>
    <property type="evidence" value="ECO:0000314"/>
    <property type="project" value="UniProtKB"/>
</dbReference>
<dbReference type="GO" id="GO:0019028">
    <property type="term" value="C:viral capsid"/>
    <property type="evidence" value="ECO:0007669"/>
    <property type="project" value="UniProtKB-KW"/>
</dbReference>
<dbReference type="GO" id="GO:0044423">
    <property type="term" value="C:virion component"/>
    <property type="evidence" value="ECO:0000314"/>
    <property type="project" value="UniProtKB"/>
</dbReference>
<dbReference type="GO" id="GO:0003677">
    <property type="term" value="F:DNA binding"/>
    <property type="evidence" value="ECO:0000314"/>
    <property type="project" value="UniProtKB"/>
</dbReference>
<dbReference type="GO" id="GO:0042803">
    <property type="term" value="F:protein homodimerization activity"/>
    <property type="evidence" value="ECO:0000314"/>
    <property type="project" value="UniProtKB"/>
</dbReference>
<dbReference type="GO" id="GO:0046802">
    <property type="term" value="P:exit of virus from host cell nucleus by nuclear egress"/>
    <property type="evidence" value="ECO:0000314"/>
    <property type="project" value="UniProtKB"/>
</dbReference>
<dbReference type="InterPro" id="IPR009893">
    <property type="entry name" value="Nucleo_P80/P87"/>
</dbReference>
<dbReference type="Pfam" id="PF07267">
    <property type="entry name" value="Nucleo_P87"/>
    <property type="match status" value="1"/>
</dbReference>
<dbReference type="PIRSF" id="PIRSF003639">
    <property type="entry name" value="Nucleo_P87"/>
    <property type="match status" value="1"/>
</dbReference>
<accession>Q00733</accession>
<proteinExistence type="evidence at protein level"/>
<sequence length="691" mass="79879">MNDSNSLLITRLAAQILSRNMQTVDVIVDDKTLSLEEKIDTLTSMVLAVNSPPQSPPRVTSSDLAASIIKNNSKMVGNDFEMRYNVLRMAVVFVKHYPKYYNETTAGLVAEIESNLLQYQNYVNQGNYQNIEGYDSLLNKAEECYVKIDRLFKESIKKIMDDTEAFEREQEAERLRAEQTAANALLERRAQTSADDVVNRADANIPTAFSDPLPGPSAPRYMYESSESDTYMETARRTAEHYTDQDKDYNAAYTADEYNSLVKTVLLRLIEKALATLKNRLHITTIDQLKKFRDYLNSDADAGEFQIFLNQEDCVILKNLSNLASKFFNVRCVADTLEVMLEALRNNIELVQPESDAVRRIVIKMTQEIKDSSTPLYNIAMYKSDYDAIKNKNIKTLFDLYNDRLPINFLDTSATSPVRKTSGKRSAEDDLLPTRSSKRANRPEINVISSEDEQEDDDVEDVDYEKESKRRKLEDEDFLKLKALEFSKDIVNEKLQKIIVVTDGMKRLYEYCNCKNSLETLPSAANYGSLLKRLNLYNLDHIEMNVNFYELLFPLTLYNDNDNSDKTLSHQLVNYIFLASNYFQNCAKNFNYMRETFNVFGPFKQIDFMVMFVIKFNFLCDMRNFAKLIDELVPNKQPNMRIHSVLVMRDKIVKLAFSNLQFQTFSKKDKSRNTKHLQRLIMLMNANYNVI</sequence>